<organism>
    <name type="scientific">Mus musculus</name>
    <name type="common">Mouse</name>
    <dbReference type="NCBI Taxonomy" id="10090"/>
    <lineage>
        <taxon>Eukaryota</taxon>
        <taxon>Metazoa</taxon>
        <taxon>Chordata</taxon>
        <taxon>Craniata</taxon>
        <taxon>Vertebrata</taxon>
        <taxon>Euteleostomi</taxon>
        <taxon>Mammalia</taxon>
        <taxon>Eutheria</taxon>
        <taxon>Euarchontoglires</taxon>
        <taxon>Glires</taxon>
        <taxon>Rodentia</taxon>
        <taxon>Myomorpha</taxon>
        <taxon>Muroidea</taxon>
        <taxon>Muridae</taxon>
        <taxon>Murinae</taxon>
        <taxon>Mus</taxon>
        <taxon>Mus</taxon>
    </lineage>
</organism>
<comment type="function">
    <text evidence="1">Component of the telomerase ribonucleoprotein (RNP) complex that is essential for the replication of chromosome termini. Is a component of the double-stranded telomeric DNA-binding TRF1 complex which is involved in the regulation of telomere length by cis-inhibition of telomerase. Also acts as a single-stranded telomeric DNA-binding protein and thus may act as a downstream effector of the TRF1 complex and may transduce information about telomere maintenance and/or length to the telomere terminus. Component of the shelterin complex (telosome) that is involved in the regulation of telomere length and protection. Shelterin associates with arrays of double-stranded TTAGGG repeats added by telomerase and protects chromosome ends; without its protective activity, telomeres are no longer hidden from the DNA damage surveillance and chromosome ends are inappropriately processed by DNA repair pathways. Binds to two or more telomeric single-stranded 5'-TTAGGG-3' repeats (G-strand) and with high specificity to a minimal telomeric single-stranded 5'-TAGGGTTAG-3' sequence. Binds telomeric single-stranded sequences internally or at proximity of a 3'-end. Its activity is TERT dependent but it does not increase TERT activity (By similarity).</text>
</comment>
<comment type="subunit">
    <text evidence="2">Homodimer or homooligomer. Component of the shelterin complex (telosome) composed of TERF1, TERF2, TINF2, TERF2IP, ACD and POT1. Binds single-stranded telomeric DNA as a monomer. Associated component of the telomerase holoenzyme complex. Found in a complex with TERF1, TINF2 and TNKS1. Interacts with TNKS1. Forms heterodimers with ACD. Identified in a complex with ACD and single-stranded telomeric DNA.</text>
</comment>
<comment type="interaction">
    <interactant intactId="EBI-7051001">
        <id>Q91WC1</id>
    </interactant>
    <interactant intactId="EBI-15647355">
        <id>Q5EE38-1</id>
        <label>Acd</label>
    </interactant>
    <organismsDiffer>false</organismsDiffer>
    <experiments>2</experiments>
</comment>
<comment type="interaction">
    <interactant intactId="EBI-7051001">
        <id>Q91WC1</id>
    </interactant>
    <interactant intactId="EBI-7051084">
        <id>O89023</id>
        <label>Tpp1</label>
    </interactant>
    <organismsDiffer>false</organismsDiffer>
    <experiments>2</experiments>
</comment>
<comment type="interaction">
    <interactant intactId="EBI-7051001">
        <id>Q91WC1</id>
    </interactant>
    <interactant intactId="EBI-717666">
        <id>Q96AP0</id>
        <label>ACD</label>
    </interactant>
    <organismsDiffer>true</organismsDiffer>
    <experiments>3</experiments>
</comment>
<comment type="subcellular location">
    <subcellularLocation>
        <location evidence="1">Nucleus</location>
    </subcellularLocation>
    <subcellularLocation>
        <location evidence="1">Chromosome</location>
        <location evidence="1">Telomere</location>
    </subcellularLocation>
    <text evidence="1">Colocalizes with telomeric DNA.</text>
</comment>
<comment type="alternative products">
    <event type="alternative splicing"/>
    <isoform>
        <id>Q91WC1-1</id>
        <name>1</name>
        <sequence type="displayed"/>
    </isoform>
    <isoform>
        <id>Q91WC1-2</id>
        <name>2</name>
        <sequence type="described" ref="VSP_010848 VSP_010849"/>
    </isoform>
</comment>
<comment type="similarity">
    <text evidence="4">Belongs to the telombin family.</text>
</comment>
<name>POTE1_MOUSE</name>
<reference key="1">
    <citation type="journal article" date="2005" name="Science">
        <title>The transcriptional landscape of the mammalian genome.</title>
        <authorList>
            <person name="Carninci P."/>
            <person name="Kasukawa T."/>
            <person name="Katayama S."/>
            <person name="Gough J."/>
            <person name="Frith M.C."/>
            <person name="Maeda N."/>
            <person name="Oyama R."/>
            <person name="Ravasi T."/>
            <person name="Lenhard B."/>
            <person name="Wells C."/>
            <person name="Kodzius R."/>
            <person name="Shimokawa K."/>
            <person name="Bajic V.B."/>
            <person name="Brenner S.E."/>
            <person name="Batalov S."/>
            <person name="Forrest A.R."/>
            <person name="Zavolan M."/>
            <person name="Davis M.J."/>
            <person name="Wilming L.G."/>
            <person name="Aidinis V."/>
            <person name="Allen J.E."/>
            <person name="Ambesi-Impiombato A."/>
            <person name="Apweiler R."/>
            <person name="Aturaliya R.N."/>
            <person name="Bailey T.L."/>
            <person name="Bansal M."/>
            <person name="Baxter L."/>
            <person name="Beisel K.W."/>
            <person name="Bersano T."/>
            <person name="Bono H."/>
            <person name="Chalk A.M."/>
            <person name="Chiu K.P."/>
            <person name="Choudhary V."/>
            <person name="Christoffels A."/>
            <person name="Clutterbuck D.R."/>
            <person name="Crowe M.L."/>
            <person name="Dalla E."/>
            <person name="Dalrymple B.P."/>
            <person name="de Bono B."/>
            <person name="Della Gatta G."/>
            <person name="di Bernardo D."/>
            <person name="Down T."/>
            <person name="Engstrom P."/>
            <person name="Fagiolini M."/>
            <person name="Faulkner G."/>
            <person name="Fletcher C.F."/>
            <person name="Fukushima T."/>
            <person name="Furuno M."/>
            <person name="Futaki S."/>
            <person name="Gariboldi M."/>
            <person name="Georgii-Hemming P."/>
            <person name="Gingeras T.R."/>
            <person name="Gojobori T."/>
            <person name="Green R.E."/>
            <person name="Gustincich S."/>
            <person name="Harbers M."/>
            <person name="Hayashi Y."/>
            <person name="Hensch T.K."/>
            <person name="Hirokawa N."/>
            <person name="Hill D."/>
            <person name="Huminiecki L."/>
            <person name="Iacono M."/>
            <person name="Ikeo K."/>
            <person name="Iwama A."/>
            <person name="Ishikawa T."/>
            <person name="Jakt M."/>
            <person name="Kanapin A."/>
            <person name="Katoh M."/>
            <person name="Kawasawa Y."/>
            <person name="Kelso J."/>
            <person name="Kitamura H."/>
            <person name="Kitano H."/>
            <person name="Kollias G."/>
            <person name="Krishnan S.P."/>
            <person name="Kruger A."/>
            <person name="Kummerfeld S.K."/>
            <person name="Kurochkin I.V."/>
            <person name="Lareau L.F."/>
            <person name="Lazarevic D."/>
            <person name="Lipovich L."/>
            <person name="Liu J."/>
            <person name="Liuni S."/>
            <person name="McWilliam S."/>
            <person name="Madan Babu M."/>
            <person name="Madera M."/>
            <person name="Marchionni L."/>
            <person name="Matsuda H."/>
            <person name="Matsuzawa S."/>
            <person name="Miki H."/>
            <person name="Mignone F."/>
            <person name="Miyake S."/>
            <person name="Morris K."/>
            <person name="Mottagui-Tabar S."/>
            <person name="Mulder N."/>
            <person name="Nakano N."/>
            <person name="Nakauchi H."/>
            <person name="Ng P."/>
            <person name="Nilsson R."/>
            <person name="Nishiguchi S."/>
            <person name="Nishikawa S."/>
            <person name="Nori F."/>
            <person name="Ohara O."/>
            <person name="Okazaki Y."/>
            <person name="Orlando V."/>
            <person name="Pang K.C."/>
            <person name="Pavan W.J."/>
            <person name="Pavesi G."/>
            <person name="Pesole G."/>
            <person name="Petrovsky N."/>
            <person name="Piazza S."/>
            <person name="Reed J."/>
            <person name="Reid J.F."/>
            <person name="Ring B.Z."/>
            <person name="Ringwald M."/>
            <person name="Rost B."/>
            <person name="Ruan Y."/>
            <person name="Salzberg S.L."/>
            <person name="Sandelin A."/>
            <person name="Schneider C."/>
            <person name="Schoenbach C."/>
            <person name="Sekiguchi K."/>
            <person name="Semple C.A."/>
            <person name="Seno S."/>
            <person name="Sessa L."/>
            <person name="Sheng Y."/>
            <person name="Shibata Y."/>
            <person name="Shimada H."/>
            <person name="Shimada K."/>
            <person name="Silva D."/>
            <person name="Sinclair B."/>
            <person name="Sperling S."/>
            <person name="Stupka E."/>
            <person name="Sugiura K."/>
            <person name="Sultana R."/>
            <person name="Takenaka Y."/>
            <person name="Taki K."/>
            <person name="Tammoja K."/>
            <person name="Tan S.L."/>
            <person name="Tang S."/>
            <person name="Taylor M.S."/>
            <person name="Tegner J."/>
            <person name="Teichmann S.A."/>
            <person name="Ueda H.R."/>
            <person name="van Nimwegen E."/>
            <person name="Verardo R."/>
            <person name="Wei C.L."/>
            <person name="Yagi K."/>
            <person name="Yamanishi H."/>
            <person name="Zabarovsky E."/>
            <person name="Zhu S."/>
            <person name="Zimmer A."/>
            <person name="Hide W."/>
            <person name="Bult C."/>
            <person name="Grimmond S.M."/>
            <person name="Teasdale R.D."/>
            <person name="Liu E.T."/>
            <person name="Brusic V."/>
            <person name="Quackenbush J."/>
            <person name="Wahlestedt C."/>
            <person name="Mattick J.S."/>
            <person name="Hume D.A."/>
            <person name="Kai C."/>
            <person name="Sasaki D."/>
            <person name="Tomaru Y."/>
            <person name="Fukuda S."/>
            <person name="Kanamori-Katayama M."/>
            <person name="Suzuki M."/>
            <person name="Aoki J."/>
            <person name="Arakawa T."/>
            <person name="Iida J."/>
            <person name="Imamura K."/>
            <person name="Itoh M."/>
            <person name="Kato T."/>
            <person name="Kawaji H."/>
            <person name="Kawagashira N."/>
            <person name="Kawashima T."/>
            <person name="Kojima M."/>
            <person name="Kondo S."/>
            <person name="Konno H."/>
            <person name="Nakano K."/>
            <person name="Ninomiya N."/>
            <person name="Nishio T."/>
            <person name="Okada M."/>
            <person name="Plessy C."/>
            <person name="Shibata K."/>
            <person name="Shiraki T."/>
            <person name="Suzuki S."/>
            <person name="Tagami M."/>
            <person name="Waki K."/>
            <person name="Watahiki A."/>
            <person name="Okamura-Oho Y."/>
            <person name="Suzuki H."/>
            <person name="Kawai J."/>
            <person name="Hayashizaki Y."/>
        </authorList>
    </citation>
    <scope>NUCLEOTIDE SEQUENCE [LARGE SCALE MRNA] (ISOFORMS 1 AND 2)</scope>
    <source>
        <strain>C57BL/6J</strain>
        <tissue>Aorta</tissue>
        <tissue>Cerebellum</tissue>
        <tissue>Lung</tissue>
        <tissue>Vein</tissue>
    </source>
</reference>
<reference key="2">
    <citation type="journal article" date="2004" name="Genome Res.">
        <title>The status, quality, and expansion of the NIH full-length cDNA project: the Mammalian Gene Collection (MGC).</title>
        <authorList>
            <consortium name="The MGC Project Team"/>
        </authorList>
    </citation>
    <scope>NUCLEOTIDE SEQUENCE [LARGE SCALE MRNA] (ISOFORM 1)</scope>
    <source>
        <strain>C57BL/6J</strain>
        <tissue>Retina</tissue>
    </source>
</reference>
<gene>
    <name type="primary">Pot1</name>
    <name type="synonym">Pot1a</name>
</gene>
<protein>
    <recommendedName>
        <fullName>Protection of telomeres protein 1</fullName>
        <shortName>mPot1</shortName>
    </recommendedName>
    <alternativeName>
        <fullName>POT1-like telomere end-binding protein</fullName>
    </alternativeName>
</protein>
<keyword id="KW-0025">Alternative splicing</keyword>
<keyword id="KW-0158">Chromosome</keyword>
<keyword id="KW-0238">DNA-binding</keyword>
<keyword id="KW-0539">Nucleus</keyword>
<keyword id="KW-1185">Reference proteome</keyword>
<keyword id="KW-0779">Telomere</keyword>
<proteinExistence type="evidence at protein level"/>
<dbReference type="EMBL" id="AK036052">
    <property type="protein sequence ID" value="BAC29288.1"/>
    <property type="molecule type" value="mRNA"/>
</dbReference>
<dbReference type="EMBL" id="AK040864">
    <property type="protein sequence ID" value="BAC30723.1"/>
    <property type="molecule type" value="mRNA"/>
</dbReference>
<dbReference type="EMBL" id="AK085041">
    <property type="protein sequence ID" value="BAC39349.1"/>
    <property type="molecule type" value="mRNA"/>
</dbReference>
<dbReference type="EMBL" id="BC016121">
    <property type="protein sequence ID" value="AAH16121.1"/>
    <property type="molecule type" value="mRNA"/>
</dbReference>
<dbReference type="CCDS" id="CCDS39442.1">
    <molecule id="Q91WC1-1"/>
</dbReference>
<dbReference type="RefSeq" id="NP_598692.1">
    <molecule id="Q91WC1-1"/>
    <property type="nucleotide sequence ID" value="NM_133931.4"/>
</dbReference>
<dbReference type="SMR" id="Q91WC1"/>
<dbReference type="BioGRID" id="221602">
    <property type="interactions" value="3"/>
</dbReference>
<dbReference type="ComplexPortal" id="CPX-153">
    <property type="entry name" value="Shelterin complex"/>
</dbReference>
<dbReference type="DIP" id="DIP-29608N"/>
<dbReference type="FunCoup" id="Q91WC1">
    <property type="interactions" value="2824"/>
</dbReference>
<dbReference type="IntAct" id="Q91WC1">
    <property type="interactions" value="4"/>
</dbReference>
<dbReference type="MINT" id="Q91WC1"/>
<dbReference type="STRING" id="10090.ENSMUSP00000110986"/>
<dbReference type="PhosphoSitePlus" id="Q91WC1"/>
<dbReference type="PaxDb" id="10090-ENSMUSP00000110986"/>
<dbReference type="PeptideAtlas" id="Q91WC1"/>
<dbReference type="ProteomicsDB" id="289369">
    <molecule id="Q91WC1-1"/>
</dbReference>
<dbReference type="ProteomicsDB" id="289370">
    <molecule id="Q91WC1-2"/>
</dbReference>
<dbReference type="Pumba" id="Q91WC1"/>
<dbReference type="DNASU" id="101185"/>
<dbReference type="Ensembl" id="ENSMUST00000115330.8">
    <molecule id="Q91WC1-1"/>
    <property type="protein sequence ID" value="ENSMUSP00000110986.2"/>
    <property type="gene ID" value="ENSMUSG00000029676.16"/>
</dbReference>
<dbReference type="Ensembl" id="ENSMUST00000166445.8">
    <molecule id="Q91WC1-1"/>
    <property type="protein sequence ID" value="ENSMUSP00000131928.2"/>
    <property type="gene ID" value="ENSMUSG00000029676.16"/>
</dbReference>
<dbReference type="GeneID" id="101185"/>
<dbReference type="KEGG" id="mmu:101185"/>
<dbReference type="UCSC" id="uc009bce.1">
    <molecule id="Q91WC1-1"/>
    <property type="organism name" value="mouse"/>
</dbReference>
<dbReference type="UCSC" id="uc009bcf.1">
    <molecule id="Q91WC1-2"/>
    <property type="organism name" value="mouse"/>
</dbReference>
<dbReference type="AGR" id="MGI:2141503"/>
<dbReference type="CTD" id="101185"/>
<dbReference type="MGI" id="MGI:2141503">
    <property type="gene designation" value="Pot1a"/>
</dbReference>
<dbReference type="VEuPathDB" id="HostDB:ENSMUSG00000029676"/>
<dbReference type="eggNOG" id="KOG4757">
    <property type="taxonomic scope" value="Eukaryota"/>
</dbReference>
<dbReference type="GeneTree" id="ENSGT00390000018285"/>
<dbReference type="HOGENOM" id="CLU_019567_0_0_1"/>
<dbReference type="InParanoid" id="Q91WC1"/>
<dbReference type="OMA" id="NHVHLAK"/>
<dbReference type="OrthoDB" id="2186770at2759"/>
<dbReference type="PhylomeDB" id="Q91WC1"/>
<dbReference type="TreeFam" id="TF328398"/>
<dbReference type="Reactome" id="R-MMU-110330">
    <property type="pathway name" value="Recognition and association of DNA glycosylase with site containing an affected purine"/>
</dbReference>
<dbReference type="Reactome" id="R-MMU-110331">
    <property type="pathway name" value="Cleavage of the damaged purine"/>
</dbReference>
<dbReference type="Reactome" id="R-MMU-171319">
    <property type="pathway name" value="Telomere Extension By Telomerase"/>
</dbReference>
<dbReference type="Reactome" id="R-MMU-174411">
    <property type="pathway name" value="Polymerase switching on the C-strand of the telomere"/>
</dbReference>
<dbReference type="Reactome" id="R-MMU-174414">
    <property type="pathway name" value="Processive synthesis on the C-strand of the telomere"/>
</dbReference>
<dbReference type="Reactome" id="R-MMU-174417">
    <property type="pathway name" value="Telomere C-strand (Lagging Strand) Synthesis"/>
</dbReference>
<dbReference type="Reactome" id="R-MMU-174430">
    <property type="pathway name" value="Telomere C-strand synthesis initiation"/>
</dbReference>
<dbReference type="Reactome" id="R-MMU-174437">
    <property type="pathway name" value="Removal of the Flap Intermediate from the C-strand"/>
</dbReference>
<dbReference type="Reactome" id="R-MMU-2559586">
    <property type="pathway name" value="DNA Damage/Telomere Stress Induced Senescence"/>
</dbReference>
<dbReference type="Reactome" id="R-MMU-9670095">
    <property type="pathway name" value="Inhibition of DNA recombination at telomere"/>
</dbReference>
<dbReference type="BioGRID-ORCS" id="101185">
    <property type="hits" value="16 hits in 81 CRISPR screens"/>
</dbReference>
<dbReference type="ChiTaRS" id="Pot1a">
    <property type="organism name" value="mouse"/>
</dbReference>
<dbReference type="PRO" id="PR:Q91WC1"/>
<dbReference type="Proteomes" id="UP000000589">
    <property type="component" value="Chromosome 6"/>
</dbReference>
<dbReference type="RNAct" id="Q91WC1">
    <property type="molecule type" value="protein"/>
</dbReference>
<dbReference type="Bgee" id="ENSMUSG00000029676">
    <property type="expression patterns" value="Expressed in undifferentiated genital tubercle and 246 other cell types or tissues"/>
</dbReference>
<dbReference type="ExpressionAtlas" id="Q91WC1">
    <property type="expression patterns" value="baseline and differential"/>
</dbReference>
<dbReference type="GO" id="GO:0000781">
    <property type="term" value="C:chromosome, telomeric region"/>
    <property type="evidence" value="ECO:0000314"/>
    <property type="project" value="BHF-UCL"/>
</dbReference>
<dbReference type="GO" id="GO:0000783">
    <property type="term" value="C:nuclear telomere cap complex"/>
    <property type="evidence" value="ECO:0000314"/>
    <property type="project" value="MGI"/>
</dbReference>
<dbReference type="GO" id="GO:0005654">
    <property type="term" value="C:nucleoplasm"/>
    <property type="evidence" value="ECO:0000304"/>
    <property type="project" value="Reactome"/>
</dbReference>
<dbReference type="GO" id="GO:0070187">
    <property type="term" value="C:shelterin complex"/>
    <property type="evidence" value="ECO:0000266"/>
    <property type="project" value="ComplexPortal"/>
</dbReference>
<dbReference type="GO" id="GO:0043047">
    <property type="term" value="F:single-stranded telomeric DNA binding"/>
    <property type="evidence" value="ECO:0000314"/>
    <property type="project" value="MGI"/>
</dbReference>
<dbReference type="GO" id="GO:0042162">
    <property type="term" value="F:telomeric DNA binding"/>
    <property type="evidence" value="ECO:0000314"/>
    <property type="project" value="BHF-UCL"/>
</dbReference>
<dbReference type="GO" id="GO:0051276">
    <property type="term" value="P:chromosome organization"/>
    <property type="evidence" value="ECO:0000316"/>
    <property type="project" value="MGI"/>
</dbReference>
<dbReference type="GO" id="GO:0032206">
    <property type="term" value="P:positive regulation of telomere maintenance"/>
    <property type="evidence" value="ECO:0000303"/>
    <property type="project" value="ComplexPortal"/>
</dbReference>
<dbReference type="GO" id="GO:0016233">
    <property type="term" value="P:telomere capping"/>
    <property type="evidence" value="ECO:0000266"/>
    <property type="project" value="ComplexPortal"/>
</dbReference>
<dbReference type="GO" id="GO:0007004">
    <property type="term" value="P:telomere maintenance via telomerase"/>
    <property type="evidence" value="ECO:0000250"/>
    <property type="project" value="UniProtKB"/>
</dbReference>
<dbReference type="CDD" id="cd04497">
    <property type="entry name" value="hPOT1_OB1_like"/>
    <property type="match status" value="1"/>
</dbReference>
<dbReference type="CDD" id="cd04498">
    <property type="entry name" value="hPOT1_OB2"/>
    <property type="match status" value="1"/>
</dbReference>
<dbReference type="CDD" id="cd20374">
    <property type="entry name" value="Pot1C"/>
    <property type="match status" value="1"/>
</dbReference>
<dbReference type="FunFam" id="2.40.50.140:FF:000119">
    <property type="entry name" value="Protection of telomeres 1 homolog"/>
    <property type="match status" value="1"/>
</dbReference>
<dbReference type="FunFam" id="2.40.50.140:FF:000138">
    <property type="entry name" value="Protection of telomeres 1 homolog"/>
    <property type="match status" value="1"/>
</dbReference>
<dbReference type="Gene3D" id="2.40.50.140">
    <property type="entry name" value="Nucleic acid-binding proteins"/>
    <property type="match status" value="2"/>
</dbReference>
<dbReference type="InterPro" id="IPR012340">
    <property type="entry name" value="NA-bd_OB-fold"/>
</dbReference>
<dbReference type="InterPro" id="IPR028389">
    <property type="entry name" value="POT1"/>
</dbReference>
<dbReference type="InterPro" id="IPR048953">
    <property type="entry name" value="POT1_C_insert"/>
</dbReference>
<dbReference type="InterPro" id="IPR032042">
    <property type="entry name" value="POT1PC"/>
</dbReference>
<dbReference type="InterPro" id="IPR011564">
    <property type="entry name" value="Telomer_end-bd_POT1/Cdc13"/>
</dbReference>
<dbReference type="PANTHER" id="PTHR14513">
    <property type="entry name" value="PROTECTION OF TELOMERES 1"/>
    <property type="match status" value="1"/>
</dbReference>
<dbReference type="PANTHER" id="PTHR14513:SF2">
    <property type="entry name" value="PROTECTION OF TELOMERES PROTEIN 1"/>
    <property type="match status" value="1"/>
</dbReference>
<dbReference type="Pfam" id="PF02765">
    <property type="entry name" value="POT1"/>
    <property type="match status" value="1"/>
</dbReference>
<dbReference type="Pfam" id="PF21375">
    <property type="entry name" value="POT1_C_insert"/>
    <property type="match status" value="1"/>
</dbReference>
<dbReference type="Pfam" id="PF16686">
    <property type="entry name" value="POT1PC"/>
    <property type="match status" value="1"/>
</dbReference>
<dbReference type="SMART" id="SM00976">
    <property type="entry name" value="Telo_bind"/>
    <property type="match status" value="1"/>
</dbReference>
<dbReference type="SUPFAM" id="SSF50249">
    <property type="entry name" value="Nucleic acid-binding proteins"/>
    <property type="match status" value="2"/>
</dbReference>
<accession>Q91WC1</accession>
<accession>Q8BUH9</accession>
<evidence type="ECO:0000250" key="1"/>
<evidence type="ECO:0000250" key="2">
    <source>
        <dbReference type="UniProtKB" id="Q9NUX5"/>
    </source>
</evidence>
<evidence type="ECO:0000303" key="3">
    <source>
    </source>
</evidence>
<evidence type="ECO:0000305" key="4"/>
<feature type="chain" id="PRO_0000121730" description="Protection of telomeres protein 1">
    <location>
        <begin position="1"/>
        <end position="640"/>
    </location>
</feature>
<feature type="splice variant" id="VSP_010848" description="In isoform 2." evidence="3">
    <original>A</original>
    <variation>G</variation>
    <location>
        <position position="538"/>
    </location>
</feature>
<feature type="splice variant" id="VSP_010849" description="In isoform 2." evidence="3">
    <location>
        <begin position="539"/>
        <end position="640"/>
    </location>
</feature>
<sequence length="640" mass="70863">MSLVSTAPYTYTPLNLLKEGTIANVYGVVKFFKPPYVSKGTDYCSVVTIVDQTNVKLTCMLFSGNYEALPIIYKVGDIVRFHRLKIQVYKNELQGINCSGFASLTFEGTVGMPVTARTSSKVFSFTPQDQKMVEALRVWASKHISASSTLVQLCDAQPMQYYDLTCQLLGKAQVDSTAFLLKVWDGTQTVLPSWRVSTQDLTFEGDLSHIERLQSLVVDILVYDNHVQVARSIEVGCFLRLYSLHTKLQPGNSETSSSESLRLEFHLHGGTSYGRGIRVLPDTSPCVDQLKKALEGANLPVTETSTGICQSENGDSSALSNSGSGAVSPYEEERCQQVSATILTNHQHLEKTPLCAILTQKAPQQYRVRAKLRSYLPRRLSQSVKLLCPKCHSVQEVPHGDSLDKILQDAATEAPDIKLKATSLYYSKVWTTEDQGGRQVAVHFVKNNGILPASSECLILIEGGRLCEVSKLSSKFHSVMPVRSGPESLELLTLSAPFLIQGKVHHYGCKQCSSLKPIQNLNSRFHKGPWTPSSVAEALGVVPLQYVFVMVFTLDDGTGVLEAYLKDSEHFFKIPASEVLTDDDLQRSLETIMDMICPPGIKVDAYPWLECLLKSYNVTIGTERRICYQIFDTTVAENVV</sequence>